<comment type="function">
    <text evidence="1">Non catalytic polymerase cofactor and regulatory protein that plays a role in viral transcription and replication. Stabilizes the RNA polymerase L to the N-RNA template and binds the soluble protein N, preventing it from encapsidating non-genomic RNA. Also inhibits host IFN-alpha and IFN-beta signaling by binding and retaining phosphorylated STAT1 in the cytoplasm or by inhibiting the DNA binding of STAT1 in the nucleus (By similarity).</text>
</comment>
<comment type="subunit">
    <text evidence="1">Homotrimer when phosphorylated. This trimer is stabilized by binding to the L protein. Binds soluble protein N, and ribonucleocapsid. Interacts with host STAT1, STAT2 and PML (By similarity).</text>
</comment>
<comment type="subcellular location">
    <molecule>Phosphoprotein</molecule>
    <subcellularLocation>
        <location>Virion</location>
    </subcellularLocation>
    <subcellularLocation>
        <location evidence="1">Host cytoplasm</location>
    </subcellularLocation>
</comment>
<comment type="subcellular location">
    <molecule>Isoform P2</molecule>
    <subcellularLocation>
        <location evidence="1">Host cytoplasm</location>
    </subcellularLocation>
</comment>
<comment type="subcellular location">
    <molecule>Isoform P4</molecule>
    <subcellularLocation>
        <location evidence="1">Host nucleus</location>
    </subcellularLocation>
</comment>
<comment type="subcellular location">
    <molecule>Isoform P5</molecule>
    <subcellularLocation>
        <location evidence="1">Host nucleus</location>
    </subcellularLocation>
</comment>
<comment type="alternative products">
    <event type="alternative initiation"/>
    <isoform>
        <id>Q6X1D7-1</id>
        <name>P</name>
        <sequence type="displayed"/>
    </isoform>
    <isoform>
        <id>Q6X1D7-2</id>
        <name>P2</name>
        <sequence type="described" ref="VSP_026889"/>
    </isoform>
    <isoform>
        <id>Q6X1D7-3</id>
        <name>P4</name>
        <sequence type="described" ref="VSP_026888"/>
    </isoform>
    <isoform>
        <id>Q6X1D7-4</id>
        <name>P5</name>
        <sequence type="described" ref="VSP_026887"/>
    </isoform>
</comment>
<comment type="PTM">
    <text evidence="1">Phosphorylated by host PKC and by an unknown kinase.</text>
</comment>
<comment type="similarity">
    <text evidence="3">Belongs to the lyssavirus protein P family.</text>
</comment>
<keyword id="KW-0024">Alternative initiation</keyword>
<keyword id="KW-0143">Chaperone</keyword>
<keyword id="KW-1035">Host cytoplasm</keyword>
<keyword id="KW-1048">Host nucleus</keyword>
<keyword id="KW-0945">Host-virus interaction</keyword>
<keyword id="KW-1090">Inhibition of host innate immune response by virus</keyword>
<keyword id="KW-1114">Inhibition of host interferon signaling pathway by virus</keyword>
<keyword id="KW-1105">Inhibition of host STAT1 by virus</keyword>
<keyword id="KW-1106">Inhibition of host STAT2 by virus</keyword>
<keyword id="KW-0922">Interferon antiviral system evasion</keyword>
<keyword id="KW-0597">Phosphoprotein</keyword>
<keyword id="KW-0899">Viral immunoevasion</keyword>
<keyword id="KW-0693">Viral RNA replication</keyword>
<keyword id="KW-0946">Virion</keyword>
<accession>Q6X1D7</accession>
<gene>
    <name type="primary">P</name>
</gene>
<proteinExistence type="inferred from homology"/>
<organismHost>
    <name type="scientific">Myotis blythii</name>
    <name type="common">Lesser mouse-eared bat</name>
    <dbReference type="NCBI Taxonomy" id="109482"/>
</organismHost>
<sequence>MSKIFVNPSAIRAGLADLEMAEETVDLVNKNVEESQAHLQAEPIEVDALPEDMKRLQISEPKPCQLPDGTCMKEEGGDEDFYMAESGDPYIPLQSYLDTMGIQIVRKMKTGERFFKIWSQSVEEIISYVAVNFPVPPGKSLADKSTQTSVEKSKPASQPTQPKKEDQLSKVNIDSQESSGPPALDWAATNDDDDASVEAEIAHQIAESFSKKYKFPSRSSGIFLYNFEQLKMNLDDIVREAKGIPGVTRRAGDGVRLPLRCILGWVASTHSRRFQLLVNSDKLNKVMQDDINRYLAY</sequence>
<reference key="1">
    <citation type="journal article" date="2003" name="Virus Res.">
        <title>Bat lyssaviruses (Aravan and Khujand) from Central Asia: phylogenetic relationships according to N, P and G gene sequences.</title>
        <authorList>
            <person name="Kuzmin I.V."/>
            <person name="Orciari L.A."/>
            <person name="Arai Y.T."/>
            <person name="Smith J.S."/>
            <person name="Hanlon C.A."/>
            <person name="Kameoka Y."/>
            <person name="Rupprecht C.E."/>
        </authorList>
    </citation>
    <scope>NUCLEOTIDE SEQUENCE [GENOMIC RNA]</scope>
</reference>
<reference key="2">
    <citation type="journal article" date="2008" name="Virus Res.">
        <title>Complete genomes of Aravan, Khujand, Irkut and West Caucasian bat viruses, with special attention to the polymerase gene and non-coding regions.</title>
        <authorList>
            <person name="Kuzmin I.V."/>
            <person name="Wu X."/>
            <person name="Tordo N."/>
            <person name="Rupprecht C.E."/>
        </authorList>
    </citation>
    <scope>NUCLEOTIDE SEQUENCE [GENOMIC RNA]</scope>
</reference>
<dbReference type="EMBL" id="EF614259">
    <property type="protein sequence ID" value="AAP86773.1"/>
    <property type="molecule type" value="Genomic_RNA"/>
</dbReference>
<dbReference type="RefSeq" id="YP_007641393.1">
    <molecule id="Q6X1D7-1"/>
    <property type="nucleotide sequence ID" value="NC_020808.1"/>
</dbReference>
<dbReference type="SMR" id="Q6X1D7"/>
<dbReference type="GeneID" id="14857926"/>
<dbReference type="KEGG" id="vg:14857926"/>
<dbReference type="OrthoDB" id="6918at10239"/>
<dbReference type="Proteomes" id="UP000007445">
    <property type="component" value="Genome"/>
</dbReference>
<dbReference type="GO" id="GO:0030430">
    <property type="term" value="C:host cell cytoplasm"/>
    <property type="evidence" value="ECO:0007669"/>
    <property type="project" value="UniProtKB-SubCell"/>
</dbReference>
<dbReference type="GO" id="GO:0042025">
    <property type="term" value="C:host cell nucleus"/>
    <property type="evidence" value="ECO:0007669"/>
    <property type="project" value="UniProtKB-SubCell"/>
</dbReference>
<dbReference type="GO" id="GO:0044423">
    <property type="term" value="C:virion component"/>
    <property type="evidence" value="ECO:0007669"/>
    <property type="project" value="UniProtKB-KW"/>
</dbReference>
<dbReference type="GO" id="GO:0003968">
    <property type="term" value="F:RNA-directed RNA polymerase activity"/>
    <property type="evidence" value="ECO:0007669"/>
    <property type="project" value="InterPro"/>
</dbReference>
<dbReference type="GO" id="GO:0052170">
    <property type="term" value="P:symbiont-mediated suppression of host innate immune response"/>
    <property type="evidence" value="ECO:0007669"/>
    <property type="project" value="UniProtKB-KW"/>
</dbReference>
<dbReference type="GO" id="GO:0039563">
    <property type="term" value="P:symbiont-mediated suppression of host JAK-STAT cascade via inhibition of STAT1 activity"/>
    <property type="evidence" value="ECO:0007669"/>
    <property type="project" value="UniProtKB-KW"/>
</dbReference>
<dbReference type="GO" id="GO:0039564">
    <property type="term" value="P:symbiont-mediated suppression of host JAK-STAT cascade via inhibition of STAT2 activity"/>
    <property type="evidence" value="ECO:0007669"/>
    <property type="project" value="UniProtKB-KW"/>
</dbReference>
<dbReference type="GO" id="GO:0039502">
    <property type="term" value="P:symbiont-mediated suppression of host type I interferon-mediated signaling pathway"/>
    <property type="evidence" value="ECO:0007669"/>
    <property type="project" value="UniProtKB-KW"/>
</dbReference>
<dbReference type="GO" id="GO:0019083">
    <property type="term" value="P:viral transcription"/>
    <property type="evidence" value="ECO:0007669"/>
    <property type="project" value="InterPro"/>
</dbReference>
<dbReference type="CDD" id="cd21032">
    <property type="entry name" value="RABV_P-protein-C_like"/>
    <property type="match status" value="1"/>
</dbReference>
<dbReference type="Gene3D" id="6.10.140.1560">
    <property type="match status" value="1"/>
</dbReference>
<dbReference type="Gene3D" id="1.20.120.820">
    <property type="entry name" value="Phosphoprotein, C-terminal domain"/>
    <property type="match status" value="1"/>
</dbReference>
<dbReference type="InterPro" id="IPR004259">
    <property type="entry name" value="PP_M1-like"/>
</dbReference>
<dbReference type="InterPro" id="IPR037199">
    <property type="entry name" value="PP_M1_C"/>
</dbReference>
<dbReference type="InterPro" id="IPR049506">
    <property type="entry name" value="RABV_P-like_C"/>
</dbReference>
<dbReference type="Pfam" id="PF03012">
    <property type="entry name" value="PP_M1"/>
    <property type="match status" value="1"/>
</dbReference>
<dbReference type="SUPFAM" id="SSF118173">
    <property type="entry name" value="Phosphoprotein M1, C-terminal domain"/>
    <property type="match status" value="1"/>
</dbReference>
<name>PHOSP_ARAV</name>
<feature type="chain" id="PRO_0000295246" description="Phosphoprotein">
    <location>
        <begin position="1"/>
        <end position="297"/>
    </location>
</feature>
<feature type="region of interest" description="DYNLL1 and DYNLL2 binding" evidence="1">
    <location>
        <begin position="138"/>
        <end position="172"/>
    </location>
</feature>
<feature type="region of interest" description="Disordered" evidence="2">
    <location>
        <begin position="140"/>
        <end position="189"/>
    </location>
</feature>
<feature type="short sequence motif" description="Nuclear export signal" evidence="1">
    <location>
        <begin position="49"/>
        <end position="58"/>
    </location>
</feature>
<feature type="short sequence motif" description="Nuclear localization signal" evidence="1">
    <location>
        <begin position="211"/>
        <end position="214"/>
    </location>
</feature>
<feature type="compositionally biased region" description="Polar residues" evidence="2">
    <location>
        <begin position="143"/>
        <end position="161"/>
    </location>
</feature>
<feature type="compositionally biased region" description="Polar residues" evidence="2">
    <location>
        <begin position="169"/>
        <end position="179"/>
    </location>
</feature>
<feature type="modified residue" description="Phosphoserine; by host PKC" evidence="1">
    <location>
        <position position="210"/>
    </location>
</feature>
<feature type="modified residue" description="Phosphoserine; by host PKC" evidence="1">
    <location>
        <position position="271"/>
    </location>
</feature>
<feature type="splice variant" id="VSP_026887" description="In isoform P5." evidence="3">
    <location>
        <begin position="1"/>
        <end position="82"/>
    </location>
</feature>
<feature type="splice variant" id="VSP_026888" description="In isoform P4." evidence="3">
    <location>
        <begin position="1"/>
        <end position="52"/>
    </location>
</feature>
<feature type="splice variant" id="VSP_026889" description="In isoform P2." evidence="3">
    <location>
        <begin position="1"/>
        <end position="19"/>
    </location>
</feature>
<evidence type="ECO:0000250" key="1"/>
<evidence type="ECO:0000256" key="2">
    <source>
        <dbReference type="SAM" id="MobiDB-lite"/>
    </source>
</evidence>
<evidence type="ECO:0000305" key="3"/>
<protein>
    <recommendedName>
        <fullName>Phosphoprotein</fullName>
        <shortName>Protein P</shortName>
    </recommendedName>
    <alternativeName>
        <fullName>Protein M1</fullName>
    </alternativeName>
</protein>
<organism>
    <name type="scientific">Aravan virus</name>
    <name type="common">ARAV</name>
    <dbReference type="NCBI Taxonomy" id="211977"/>
    <lineage>
        <taxon>Viruses</taxon>
        <taxon>Riboviria</taxon>
        <taxon>Orthornavirae</taxon>
        <taxon>Negarnaviricota</taxon>
        <taxon>Haploviricotina</taxon>
        <taxon>Monjiviricetes</taxon>
        <taxon>Mononegavirales</taxon>
        <taxon>Rhabdoviridae</taxon>
        <taxon>Alpharhabdovirinae</taxon>
        <taxon>Lyssavirus</taxon>
    </lineage>
</organism>